<evidence type="ECO:0000255" key="1">
    <source>
        <dbReference type="HAMAP-Rule" id="MF_01297"/>
    </source>
</evidence>
<evidence type="ECO:0000256" key="2">
    <source>
        <dbReference type="SAM" id="MobiDB-lite"/>
    </source>
</evidence>
<evidence type="ECO:0000305" key="3"/>
<name>NBLIK_CORGB</name>
<gene>
    <name type="ordered locus">cgR_2482</name>
</gene>
<proteinExistence type="inferred from homology"/>
<comment type="similarity">
    <text evidence="1">Belongs to the nitrobindin family.</text>
</comment>
<comment type="caution">
    <text evidence="3">Lacks the conserved His residue that binds heme iron in the nitrobindin family.</text>
</comment>
<reference key="1">
    <citation type="journal article" date="2007" name="Microbiology">
        <title>Comparative analysis of the Corynebacterium glutamicum group and complete genome sequence of strain R.</title>
        <authorList>
            <person name="Yukawa H."/>
            <person name="Omumasaba C.A."/>
            <person name="Nonaka H."/>
            <person name="Kos P."/>
            <person name="Okai N."/>
            <person name="Suzuki N."/>
            <person name="Suda M."/>
            <person name="Tsuge Y."/>
            <person name="Watanabe J."/>
            <person name="Ikeda Y."/>
            <person name="Vertes A.A."/>
            <person name="Inui M."/>
        </authorList>
    </citation>
    <scope>NUCLEOTIDE SEQUENCE [LARGE SCALE GENOMIC DNA]</scope>
    <source>
        <strain>R</strain>
    </source>
</reference>
<sequence>MSENSTPNNPVVPGAGADGPSLSDSASISGSDAVNLAAEQSKSTAHRNIPGLGDLPIPDDTANLREGPNLHDGLLALLPLVGVWRGEGQADTAEDGQYAFGQQITFAHDGENYLSFESRMWKLDEEGNPTGVDQRESGFWRINLKDEIEFVCTHAGGVVEIYYGQPLNERAWQLESASTMVTATGPSTLGPGKRLYGLLPTNELGWVDERLVGDALKPRMSAQLTRVIG</sequence>
<feature type="chain" id="PRO_0000356901" description="Ferric nitrobindin-like protein">
    <location>
        <begin position="1"/>
        <end position="229"/>
    </location>
</feature>
<feature type="region of interest" description="Disordered" evidence="2">
    <location>
        <begin position="1"/>
        <end position="54"/>
    </location>
</feature>
<feature type="short sequence motif" description="GXWXGXG" evidence="1">
    <location>
        <begin position="82"/>
        <end position="88"/>
    </location>
</feature>
<feature type="compositionally biased region" description="Low complexity" evidence="2">
    <location>
        <begin position="18"/>
        <end position="33"/>
    </location>
</feature>
<dbReference type="EMBL" id="AP009044">
    <property type="protein sequence ID" value="BAF55493.1"/>
    <property type="molecule type" value="Genomic_DNA"/>
</dbReference>
<dbReference type="RefSeq" id="WP_003863137.1">
    <property type="nucleotide sequence ID" value="NC_009342.1"/>
</dbReference>
<dbReference type="SMR" id="A4QGX7"/>
<dbReference type="GeneID" id="1020525"/>
<dbReference type="KEGG" id="cgt:cgR_2482"/>
<dbReference type="HOGENOM" id="CLU_085483_0_0_11"/>
<dbReference type="PhylomeDB" id="A4QGX7"/>
<dbReference type="Proteomes" id="UP000006698">
    <property type="component" value="Chromosome"/>
</dbReference>
<dbReference type="CDD" id="cd07828">
    <property type="entry name" value="lipocalin_heme-bd-THAP4-like"/>
    <property type="match status" value="1"/>
</dbReference>
<dbReference type="Gene3D" id="2.40.128.20">
    <property type="match status" value="1"/>
</dbReference>
<dbReference type="HAMAP" id="MF_01297">
    <property type="entry name" value="nitrobindin"/>
    <property type="match status" value="1"/>
</dbReference>
<dbReference type="InterPro" id="IPR012674">
    <property type="entry name" value="Calycin"/>
</dbReference>
<dbReference type="InterPro" id="IPR022939">
    <property type="entry name" value="Nb(III)_bact/plant"/>
</dbReference>
<dbReference type="InterPro" id="IPR045165">
    <property type="entry name" value="Nitrobindin"/>
</dbReference>
<dbReference type="InterPro" id="IPR014878">
    <property type="entry name" value="THAP4-like_heme-bd"/>
</dbReference>
<dbReference type="PANTHER" id="PTHR15854:SF4">
    <property type="entry name" value="PEROXYNITRITE ISOMERASE THAP4"/>
    <property type="match status" value="1"/>
</dbReference>
<dbReference type="PANTHER" id="PTHR15854">
    <property type="entry name" value="THAP4 PROTEIN"/>
    <property type="match status" value="1"/>
</dbReference>
<dbReference type="Pfam" id="PF08768">
    <property type="entry name" value="THAP4_heme-bd"/>
    <property type="match status" value="1"/>
</dbReference>
<dbReference type="SUPFAM" id="SSF50814">
    <property type="entry name" value="Lipocalins"/>
    <property type="match status" value="1"/>
</dbReference>
<protein>
    <recommendedName>
        <fullName evidence="3">Ferric nitrobindin-like protein</fullName>
    </recommendedName>
</protein>
<organism>
    <name type="scientific">Corynebacterium glutamicum (strain R)</name>
    <dbReference type="NCBI Taxonomy" id="340322"/>
    <lineage>
        <taxon>Bacteria</taxon>
        <taxon>Bacillati</taxon>
        <taxon>Actinomycetota</taxon>
        <taxon>Actinomycetes</taxon>
        <taxon>Mycobacteriales</taxon>
        <taxon>Corynebacteriaceae</taxon>
        <taxon>Corynebacterium</taxon>
    </lineage>
</organism>
<accession>A4QGX7</accession>